<reference key="1">
    <citation type="journal article" date="2006" name="Nat. Biotechnol.">
        <title>Genome sequence of the bioplastic-producing 'Knallgas' bacterium Ralstonia eutropha H16.</title>
        <authorList>
            <person name="Pohlmann A."/>
            <person name="Fricke W.F."/>
            <person name="Reinecke F."/>
            <person name="Kusian B."/>
            <person name="Liesegang H."/>
            <person name="Cramm R."/>
            <person name="Eitinger T."/>
            <person name="Ewering C."/>
            <person name="Poetter M."/>
            <person name="Schwartz E."/>
            <person name="Strittmatter A."/>
            <person name="Voss I."/>
            <person name="Gottschalk G."/>
            <person name="Steinbuechel A."/>
            <person name="Friedrich B."/>
            <person name="Bowien B."/>
        </authorList>
    </citation>
    <scope>NUCLEOTIDE SEQUENCE [LARGE SCALE GENOMIC DNA]</scope>
    <source>
        <strain>ATCC 17699 / DSM 428 / KCTC 22496 / NCIMB 10442 / H16 / Stanier 337</strain>
    </source>
</reference>
<comment type="function">
    <text evidence="1">Catalyzes the methylthiolation of N6-(dimethylallyl)adenosine (i(6)A), leading to the formation of 2-methylthio-N6-(dimethylallyl)adenosine (ms(2)i(6)A) at position 37 in tRNAs that read codons beginning with uridine.</text>
</comment>
<comment type="catalytic activity">
    <reaction evidence="1">
        <text>N(6)-dimethylallyladenosine(37) in tRNA + (sulfur carrier)-SH + AH2 + 2 S-adenosyl-L-methionine = 2-methylsulfanyl-N(6)-dimethylallyladenosine(37) in tRNA + (sulfur carrier)-H + 5'-deoxyadenosine + L-methionine + A + S-adenosyl-L-homocysteine + 2 H(+)</text>
        <dbReference type="Rhea" id="RHEA:37067"/>
        <dbReference type="Rhea" id="RHEA-COMP:10375"/>
        <dbReference type="Rhea" id="RHEA-COMP:10376"/>
        <dbReference type="Rhea" id="RHEA-COMP:14737"/>
        <dbReference type="Rhea" id="RHEA-COMP:14739"/>
        <dbReference type="ChEBI" id="CHEBI:13193"/>
        <dbReference type="ChEBI" id="CHEBI:15378"/>
        <dbReference type="ChEBI" id="CHEBI:17319"/>
        <dbReference type="ChEBI" id="CHEBI:17499"/>
        <dbReference type="ChEBI" id="CHEBI:29917"/>
        <dbReference type="ChEBI" id="CHEBI:57844"/>
        <dbReference type="ChEBI" id="CHEBI:57856"/>
        <dbReference type="ChEBI" id="CHEBI:59789"/>
        <dbReference type="ChEBI" id="CHEBI:64428"/>
        <dbReference type="ChEBI" id="CHEBI:74415"/>
        <dbReference type="ChEBI" id="CHEBI:74417"/>
        <dbReference type="EC" id="2.8.4.3"/>
    </reaction>
</comment>
<comment type="cofactor">
    <cofactor evidence="1">
        <name>[4Fe-4S] cluster</name>
        <dbReference type="ChEBI" id="CHEBI:49883"/>
    </cofactor>
    <text evidence="1">Binds 2 [4Fe-4S] clusters. One cluster is coordinated with 3 cysteines and an exchangeable S-adenosyl-L-methionine.</text>
</comment>
<comment type="subunit">
    <text evidence="1">Monomer.</text>
</comment>
<comment type="subcellular location">
    <subcellularLocation>
        <location evidence="1">Cytoplasm</location>
    </subcellularLocation>
</comment>
<comment type="similarity">
    <text evidence="1">Belongs to the methylthiotransferase family. MiaB subfamily.</text>
</comment>
<dbReference type="EC" id="2.8.4.3" evidence="1"/>
<dbReference type="EMBL" id="AM260479">
    <property type="protein sequence ID" value="CAJ91678.1"/>
    <property type="molecule type" value="Genomic_DNA"/>
</dbReference>
<dbReference type="RefSeq" id="WP_011614559.1">
    <property type="nucleotide sequence ID" value="NC_008313.1"/>
</dbReference>
<dbReference type="SMR" id="Q0KE93"/>
<dbReference type="STRING" id="381666.H16_A0528"/>
<dbReference type="KEGG" id="reh:H16_A0528"/>
<dbReference type="PATRIC" id="fig|381666.6.peg.894"/>
<dbReference type="eggNOG" id="COG0621">
    <property type="taxonomic scope" value="Bacteria"/>
</dbReference>
<dbReference type="HOGENOM" id="CLU_018697_2_0_4"/>
<dbReference type="OrthoDB" id="9805215at2"/>
<dbReference type="Proteomes" id="UP000008210">
    <property type="component" value="Chromosome 1"/>
</dbReference>
<dbReference type="GO" id="GO:0005829">
    <property type="term" value="C:cytosol"/>
    <property type="evidence" value="ECO:0007669"/>
    <property type="project" value="TreeGrafter"/>
</dbReference>
<dbReference type="GO" id="GO:0051539">
    <property type="term" value="F:4 iron, 4 sulfur cluster binding"/>
    <property type="evidence" value="ECO:0007669"/>
    <property type="project" value="UniProtKB-UniRule"/>
</dbReference>
<dbReference type="GO" id="GO:0046872">
    <property type="term" value="F:metal ion binding"/>
    <property type="evidence" value="ECO:0007669"/>
    <property type="project" value="UniProtKB-KW"/>
</dbReference>
<dbReference type="GO" id="GO:0035597">
    <property type="term" value="F:N6-isopentenyladenosine methylthiotransferase activity"/>
    <property type="evidence" value="ECO:0007669"/>
    <property type="project" value="TreeGrafter"/>
</dbReference>
<dbReference type="CDD" id="cd01335">
    <property type="entry name" value="Radical_SAM"/>
    <property type="match status" value="1"/>
</dbReference>
<dbReference type="FunFam" id="3.40.50.12160:FF:000001">
    <property type="entry name" value="tRNA-2-methylthio-N(6)-dimethylallyladenosine synthase"/>
    <property type="match status" value="1"/>
</dbReference>
<dbReference type="FunFam" id="3.80.30.20:FF:000001">
    <property type="entry name" value="tRNA-2-methylthio-N(6)-dimethylallyladenosine synthase 2"/>
    <property type="match status" value="1"/>
</dbReference>
<dbReference type="Gene3D" id="3.40.50.12160">
    <property type="entry name" value="Methylthiotransferase, N-terminal domain"/>
    <property type="match status" value="1"/>
</dbReference>
<dbReference type="Gene3D" id="3.80.30.20">
    <property type="entry name" value="tm_1862 like domain"/>
    <property type="match status" value="1"/>
</dbReference>
<dbReference type="HAMAP" id="MF_01864">
    <property type="entry name" value="tRNA_metthiotr_MiaB"/>
    <property type="match status" value="1"/>
</dbReference>
<dbReference type="InterPro" id="IPR006638">
    <property type="entry name" value="Elp3/MiaA/NifB-like_rSAM"/>
</dbReference>
<dbReference type="InterPro" id="IPR005839">
    <property type="entry name" value="Methylthiotransferase"/>
</dbReference>
<dbReference type="InterPro" id="IPR020612">
    <property type="entry name" value="Methylthiotransferase_CS"/>
</dbReference>
<dbReference type="InterPro" id="IPR013848">
    <property type="entry name" value="Methylthiotransferase_N"/>
</dbReference>
<dbReference type="InterPro" id="IPR038135">
    <property type="entry name" value="Methylthiotransferase_N_sf"/>
</dbReference>
<dbReference type="InterPro" id="IPR006463">
    <property type="entry name" value="MiaB_methiolase"/>
</dbReference>
<dbReference type="InterPro" id="IPR007197">
    <property type="entry name" value="rSAM"/>
</dbReference>
<dbReference type="InterPro" id="IPR023404">
    <property type="entry name" value="rSAM_horseshoe"/>
</dbReference>
<dbReference type="InterPro" id="IPR002792">
    <property type="entry name" value="TRAM_dom"/>
</dbReference>
<dbReference type="NCBIfam" id="TIGR01574">
    <property type="entry name" value="miaB-methiolase"/>
    <property type="match status" value="1"/>
</dbReference>
<dbReference type="NCBIfam" id="TIGR00089">
    <property type="entry name" value="MiaB/RimO family radical SAM methylthiotransferase"/>
    <property type="match status" value="1"/>
</dbReference>
<dbReference type="PANTHER" id="PTHR43020">
    <property type="entry name" value="CDK5 REGULATORY SUBUNIT-ASSOCIATED PROTEIN 1"/>
    <property type="match status" value="1"/>
</dbReference>
<dbReference type="PANTHER" id="PTHR43020:SF2">
    <property type="entry name" value="MITOCHONDRIAL TRNA METHYLTHIOTRANSFERASE CDK5RAP1"/>
    <property type="match status" value="1"/>
</dbReference>
<dbReference type="Pfam" id="PF04055">
    <property type="entry name" value="Radical_SAM"/>
    <property type="match status" value="1"/>
</dbReference>
<dbReference type="Pfam" id="PF01938">
    <property type="entry name" value="TRAM"/>
    <property type="match status" value="1"/>
</dbReference>
<dbReference type="Pfam" id="PF00919">
    <property type="entry name" value="UPF0004"/>
    <property type="match status" value="1"/>
</dbReference>
<dbReference type="SFLD" id="SFLDF00273">
    <property type="entry name" value="(dimethylallyl)adenosine_tRNA"/>
    <property type="match status" value="1"/>
</dbReference>
<dbReference type="SFLD" id="SFLDG01082">
    <property type="entry name" value="B12-binding_domain_containing"/>
    <property type="match status" value="1"/>
</dbReference>
<dbReference type="SFLD" id="SFLDG01061">
    <property type="entry name" value="methylthiotransferase"/>
    <property type="match status" value="1"/>
</dbReference>
<dbReference type="SMART" id="SM00729">
    <property type="entry name" value="Elp3"/>
    <property type="match status" value="1"/>
</dbReference>
<dbReference type="SUPFAM" id="SSF102114">
    <property type="entry name" value="Radical SAM enzymes"/>
    <property type="match status" value="1"/>
</dbReference>
<dbReference type="PROSITE" id="PS51449">
    <property type="entry name" value="MTTASE_N"/>
    <property type="match status" value="1"/>
</dbReference>
<dbReference type="PROSITE" id="PS01278">
    <property type="entry name" value="MTTASE_RADICAL"/>
    <property type="match status" value="1"/>
</dbReference>
<dbReference type="PROSITE" id="PS51918">
    <property type="entry name" value="RADICAL_SAM"/>
    <property type="match status" value="1"/>
</dbReference>
<dbReference type="PROSITE" id="PS50926">
    <property type="entry name" value="TRAM"/>
    <property type="match status" value="1"/>
</dbReference>
<feature type="chain" id="PRO_0000374475" description="tRNA-2-methylthio-N(6)-dimethylallyladenosine synthase">
    <location>
        <begin position="1"/>
        <end position="450"/>
    </location>
</feature>
<feature type="domain" description="MTTase N-terminal" evidence="1">
    <location>
        <begin position="2"/>
        <end position="119"/>
    </location>
</feature>
<feature type="domain" description="Radical SAM core" evidence="2">
    <location>
        <begin position="142"/>
        <end position="375"/>
    </location>
</feature>
<feature type="domain" description="TRAM" evidence="1">
    <location>
        <begin position="378"/>
        <end position="448"/>
    </location>
</feature>
<feature type="binding site" evidence="1">
    <location>
        <position position="11"/>
    </location>
    <ligand>
        <name>[4Fe-4S] cluster</name>
        <dbReference type="ChEBI" id="CHEBI:49883"/>
        <label>1</label>
    </ligand>
</feature>
<feature type="binding site" evidence="1">
    <location>
        <position position="48"/>
    </location>
    <ligand>
        <name>[4Fe-4S] cluster</name>
        <dbReference type="ChEBI" id="CHEBI:49883"/>
        <label>1</label>
    </ligand>
</feature>
<feature type="binding site" evidence="1">
    <location>
        <position position="82"/>
    </location>
    <ligand>
        <name>[4Fe-4S] cluster</name>
        <dbReference type="ChEBI" id="CHEBI:49883"/>
        <label>1</label>
    </ligand>
</feature>
<feature type="binding site" evidence="1">
    <location>
        <position position="156"/>
    </location>
    <ligand>
        <name>[4Fe-4S] cluster</name>
        <dbReference type="ChEBI" id="CHEBI:49883"/>
        <label>2</label>
        <note>4Fe-4S-S-AdoMet</note>
    </ligand>
</feature>
<feature type="binding site" evidence="1">
    <location>
        <position position="160"/>
    </location>
    <ligand>
        <name>[4Fe-4S] cluster</name>
        <dbReference type="ChEBI" id="CHEBI:49883"/>
        <label>2</label>
        <note>4Fe-4S-S-AdoMet</note>
    </ligand>
</feature>
<feature type="binding site" evidence="1">
    <location>
        <position position="163"/>
    </location>
    <ligand>
        <name>[4Fe-4S] cluster</name>
        <dbReference type="ChEBI" id="CHEBI:49883"/>
        <label>2</label>
        <note>4Fe-4S-S-AdoMet</note>
    </ligand>
</feature>
<proteinExistence type="inferred from homology"/>
<gene>
    <name evidence="1" type="primary">miaB</name>
    <name type="ordered locus">H16_A0528</name>
</gene>
<sequence>MKKVFVKTYGCQMNEYDSDKMVDVLNASQGLEPTDNVEEADVILFNTCSVREKAQEKVFSELGRMKALKAVKPDLVIGVGGCVASQEGASIVSRAPYVDVVFGPQTLHRLPDLIARRQRTGQSQVDISFPEIEKFDHLPPARVEGPSAFVSIMEGCSKYCSYCVVPYTRGEEVSRPFEDVLAEVAGLAEQGVREVTLLGQNVNAYRGKMGDTTEIADFALLIEYVAEIPGIERIRYTTSHPKEFTSRLVELYGRCDKLVNHLHLPVQHASDRILMAMKRGYSVLEYKSIIRKLRVLRPDMSMSSDFIVGFPGETDADFEKLMAMIEEIGYDTSFSFIFSPRPGTPAANLHDDTPHEVKLRRLQRLQATIEENVQRISQNMVGTVQRILVEGPARKDPTELHGRTENNRVVNFALPGVPQAGRDRLVGQLVDVSITQAFPHSLRGEIVVRQ</sequence>
<name>MIAB_CUPNH</name>
<organism>
    <name type="scientific">Cupriavidus necator (strain ATCC 17699 / DSM 428 / KCTC 22496 / NCIMB 10442 / H16 / Stanier 337)</name>
    <name type="common">Ralstonia eutropha</name>
    <dbReference type="NCBI Taxonomy" id="381666"/>
    <lineage>
        <taxon>Bacteria</taxon>
        <taxon>Pseudomonadati</taxon>
        <taxon>Pseudomonadota</taxon>
        <taxon>Betaproteobacteria</taxon>
        <taxon>Burkholderiales</taxon>
        <taxon>Burkholderiaceae</taxon>
        <taxon>Cupriavidus</taxon>
    </lineage>
</organism>
<evidence type="ECO:0000255" key="1">
    <source>
        <dbReference type="HAMAP-Rule" id="MF_01864"/>
    </source>
</evidence>
<evidence type="ECO:0000255" key="2">
    <source>
        <dbReference type="PROSITE-ProRule" id="PRU01266"/>
    </source>
</evidence>
<accession>Q0KE93</accession>
<keyword id="KW-0004">4Fe-4S</keyword>
<keyword id="KW-0963">Cytoplasm</keyword>
<keyword id="KW-0408">Iron</keyword>
<keyword id="KW-0411">Iron-sulfur</keyword>
<keyword id="KW-0479">Metal-binding</keyword>
<keyword id="KW-1185">Reference proteome</keyword>
<keyword id="KW-0949">S-adenosyl-L-methionine</keyword>
<keyword id="KW-0808">Transferase</keyword>
<keyword id="KW-0819">tRNA processing</keyword>
<protein>
    <recommendedName>
        <fullName evidence="1">tRNA-2-methylthio-N(6)-dimethylallyladenosine synthase</fullName>
        <ecNumber evidence="1">2.8.4.3</ecNumber>
    </recommendedName>
    <alternativeName>
        <fullName evidence="1">(Dimethylallyl)adenosine tRNA methylthiotransferase MiaB</fullName>
    </alternativeName>
    <alternativeName>
        <fullName evidence="1">tRNA-i(6)A37 methylthiotransferase</fullName>
    </alternativeName>
</protein>